<reference key="1">
    <citation type="journal article" date="2006" name="BMC Genomics">
        <title>Complete genome sequence of Shigella flexneri 5b and comparison with Shigella flexneri 2a.</title>
        <authorList>
            <person name="Nie H."/>
            <person name="Yang F."/>
            <person name="Zhang X."/>
            <person name="Yang J."/>
            <person name="Chen L."/>
            <person name="Wang J."/>
            <person name="Xiong Z."/>
            <person name="Peng J."/>
            <person name="Sun L."/>
            <person name="Dong J."/>
            <person name="Xue Y."/>
            <person name="Xu X."/>
            <person name="Chen S."/>
            <person name="Yao Z."/>
            <person name="Shen Y."/>
            <person name="Jin Q."/>
        </authorList>
    </citation>
    <scope>NUCLEOTIDE SEQUENCE [LARGE SCALE GENOMIC DNA]</scope>
    <source>
        <strain>8401</strain>
    </source>
</reference>
<organism>
    <name type="scientific">Shigella flexneri serotype 5b (strain 8401)</name>
    <dbReference type="NCBI Taxonomy" id="373384"/>
    <lineage>
        <taxon>Bacteria</taxon>
        <taxon>Pseudomonadati</taxon>
        <taxon>Pseudomonadota</taxon>
        <taxon>Gammaproteobacteria</taxon>
        <taxon>Enterobacterales</taxon>
        <taxon>Enterobacteriaceae</taxon>
        <taxon>Shigella</taxon>
    </lineage>
</organism>
<proteinExistence type="inferred from homology"/>
<gene>
    <name evidence="1" type="primary">pyrC</name>
    <name type="ordered locus">SFV_1084</name>
</gene>
<evidence type="ECO:0000255" key="1">
    <source>
        <dbReference type="HAMAP-Rule" id="MF_00219"/>
    </source>
</evidence>
<keyword id="KW-0378">Hydrolase</keyword>
<keyword id="KW-0479">Metal-binding</keyword>
<keyword id="KW-0665">Pyrimidine biosynthesis</keyword>
<keyword id="KW-0862">Zinc</keyword>
<dbReference type="EC" id="3.5.2.3" evidence="1"/>
<dbReference type="EMBL" id="CP000266">
    <property type="protein sequence ID" value="ABF03295.1"/>
    <property type="molecule type" value="Genomic_DNA"/>
</dbReference>
<dbReference type="RefSeq" id="WP_000126531.1">
    <property type="nucleotide sequence ID" value="NC_008258.1"/>
</dbReference>
<dbReference type="SMR" id="Q0T5X0"/>
<dbReference type="KEGG" id="sfv:SFV_1084"/>
<dbReference type="HOGENOM" id="CLU_041558_1_0_6"/>
<dbReference type="UniPathway" id="UPA00070">
    <property type="reaction ID" value="UER00117"/>
</dbReference>
<dbReference type="Proteomes" id="UP000000659">
    <property type="component" value="Chromosome"/>
</dbReference>
<dbReference type="GO" id="GO:0005829">
    <property type="term" value="C:cytosol"/>
    <property type="evidence" value="ECO:0007669"/>
    <property type="project" value="TreeGrafter"/>
</dbReference>
<dbReference type="GO" id="GO:0004151">
    <property type="term" value="F:dihydroorotase activity"/>
    <property type="evidence" value="ECO:0007669"/>
    <property type="project" value="UniProtKB-UniRule"/>
</dbReference>
<dbReference type="GO" id="GO:0008270">
    <property type="term" value="F:zinc ion binding"/>
    <property type="evidence" value="ECO:0007669"/>
    <property type="project" value="UniProtKB-UniRule"/>
</dbReference>
<dbReference type="GO" id="GO:0006207">
    <property type="term" value="P:'de novo' pyrimidine nucleobase biosynthetic process"/>
    <property type="evidence" value="ECO:0007669"/>
    <property type="project" value="TreeGrafter"/>
</dbReference>
<dbReference type="GO" id="GO:0044205">
    <property type="term" value="P:'de novo' UMP biosynthetic process"/>
    <property type="evidence" value="ECO:0007669"/>
    <property type="project" value="UniProtKB-UniRule"/>
</dbReference>
<dbReference type="CDD" id="cd01294">
    <property type="entry name" value="DHOase"/>
    <property type="match status" value="1"/>
</dbReference>
<dbReference type="FunFam" id="3.20.20.140:FF:000006">
    <property type="entry name" value="Dihydroorotase"/>
    <property type="match status" value="1"/>
</dbReference>
<dbReference type="Gene3D" id="3.20.20.140">
    <property type="entry name" value="Metal-dependent hydrolases"/>
    <property type="match status" value="1"/>
</dbReference>
<dbReference type="HAMAP" id="MF_00219">
    <property type="entry name" value="PyrC_classII"/>
    <property type="match status" value="1"/>
</dbReference>
<dbReference type="InterPro" id="IPR006680">
    <property type="entry name" value="Amidohydro-rel"/>
</dbReference>
<dbReference type="InterPro" id="IPR004721">
    <property type="entry name" value="DHOdimr"/>
</dbReference>
<dbReference type="InterPro" id="IPR002195">
    <property type="entry name" value="Dihydroorotase_CS"/>
</dbReference>
<dbReference type="InterPro" id="IPR032466">
    <property type="entry name" value="Metal_Hydrolase"/>
</dbReference>
<dbReference type="NCBIfam" id="TIGR00856">
    <property type="entry name" value="pyrC_dimer"/>
    <property type="match status" value="1"/>
</dbReference>
<dbReference type="PANTHER" id="PTHR43137">
    <property type="entry name" value="DIHYDROOROTASE"/>
    <property type="match status" value="1"/>
</dbReference>
<dbReference type="PANTHER" id="PTHR43137:SF1">
    <property type="entry name" value="DIHYDROOROTASE"/>
    <property type="match status" value="1"/>
</dbReference>
<dbReference type="Pfam" id="PF01979">
    <property type="entry name" value="Amidohydro_1"/>
    <property type="match status" value="1"/>
</dbReference>
<dbReference type="PIRSF" id="PIRSF001237">
    <property type="entry name" value="DHOdimr"/>
    <property type="match status" value="1"/>
</dbReference>
<dbReference type="SUPFAM" id="SSF51556">
    <property type="entry name" value="Metallo-dependent hydrolases"/>
    <property type="match status" value="1"/>
</dbReference>
<dbReference type="PROSITE" id="PS00482">
    <property type="entry name" value="DIHYDROOROTASE_1"/>
    <property type="match status" value="1"/>
</dbReference>
<dbReference type="PROSITE" id="PS00483">
    <property type="entry name" value="DIHYDROOROTASE_2"/>
    <property type="match status" value="1"/>
</dbReference>
<accession>Q0T5X0</accession>
<comment type="function">
    <text evidence="1">Catalyzes the reversible cyclization of carbamoyl aspartate to dihydroorotate.</text>
</comment>
<comment type="catalytic activity">
    <reaction evidence="1">
        <text>(S)-dihydroorotate + H2O = N-carbamoyl-L-aspartate + H(+)</text>
        <dbReference type="Rhea" id="RHEA:24296"/>
        <dbReference type="ChEBI" id="CHEBI:15377"/>
        <dbReference type="ChEBI" id="CHEBI:15378"/>
        <dbReference type="ChEBI" id="CHEBI:30864"/>
        <dbReference type="ChEBI" id="CHEBI:32814"/>
        <dbReference type="EC" id="3.5.2.3"/>
    </reaction>
</comment>
<comment type="cofactor">
    <cofactor evidence="1">
        <name>Zn(2+)</name>
        <dbReference type="ChEBI" id="CHEBI:29105"/>
    </cofactor>
    <text evidence="1">Binds 2 Zn(2+) ions per subunit.</text>
</comment>
<comment type="pathway">
    <text evidence="1">Pyrimidine metabolism; UMP biosynthesis via de novo pathway; (S)-dihydroorotate from bicarbonate: step 3/3.</text>
</comment>
<comment type="subunit">
    <text evidence="1">Homodimer.</text>
</comment>
<comment type="similarity">
    <text evidence="1">Belongs to the metallo-dependent hydrolases superfamily. DHOase family. Class II DHOase subfamily.</text>
</comment>
<name>PYRC_SHIF8</name>
<sequence>MTAPSQVLKIRRPDDWHLHLRDGDMLKTVVPYTSEIYGRAIVMPNLAPPVTTVEAAVAYRQRILDAVPAGHDFTPLMTCYLTDSLDPNELERGFNEAVFTAAKLYPANATTNSSHGVTSIDAIMPVLERMEKIGMPLLVHGEVTHADIDIFDREARFIESVMEPLRQRLTALKVVFEHITTKDAADYVRDGNERLAATITPQHLMFNRNHMLVGGVRPHLYCLPILKRNIHQQALRELVTSGFNRVFLGTDSAPHARHRKESSCGCAGCFNAPTALGSYATVFEEMNALQHFEAFCSVNGPQFYGLPVNDTFIELVREEQQVAESIALTDDTLVPFLAGETVRWSVKQ</sequence>
<feature type="chain" id="PRO_1000024061" description="Dihydroorotase">
    <location>
        <begin position="1"/>
        <end position="348"/>
    </location>
</feature>
<feature type="active site" evidence="1">
    <location>
        <position position="251"/>
    </location>
</feature>
<feature type="binding site" evidence="1">
    <location>
        <position position="17"/>
    </location>
    <ligand>
        <name>Zn(2+)</name>
        <dbReference type="ChEBI" id="CHEBI:29105"/>
        <label>1</label>
    </ligand>
</feature>
<feature type="binding site" evidence="1">
    <location>
        <begin position="19"/>
        <end position="21"/>
    </location>
    <ligand>
        <name>substrate</name>
    </ligand>
</feature>
<feature type="binding site" evidence="1">
    <location>
        <position position="19"/>
    </location>
    <ligand>
        <name>Zn(2+)</name>
        <dbReference type="ChEBI" id="CHEBI:29105"/>
        <label>1</label>
    </ligand>
</feature>
<feature type="binding site" evidence="1">
    <location>
        <position position="45"/>
    </location>
    <ligand>
        <name>substrate</name>
    </ligand>
</feature>
<feature type="binding site" description="via carbamate group" evidence="1">
    <location>
        <position position="103"/>
    </location>
    <ligand>
        <name>Zn(2+)</name>
        <dbReference type="ChEBI" id="CHEBI:29105"/>
        <label>1</label>
    </ligand>
</feature>
<feature type="binding site" description="via carbamate group" evidence="1">
    <location>
        <position position="103"/>
    </location>
    <ligand>
        <name>Zn(2+)</name>
        <dbReference type="ChEBI" id="CHEBI:29105"/>
        <label>2</label>
    </ligand>
</feature>
<feature type="binding site" evidence="1">
    <location>
        <position position="140"/>
    </location>
    <ligand>
        <name>substrate</name>
    </ligand>
</feature>
<feature type="binding site" evidence="1">
    <location>
        <position position="140"/>
    </location>
    <ligand>
        <name>Zn(2+)</name>
        <dbReference type="ChEBI" id="CHEBI:29105"/>
        <label>2</label>
    </ligand>
</feature>
<feature type="binding site" evidence="1">
    <location>
        <position position="178"/>
    </location>
    <ligand>
        <name>Zn(2+)</name>
        <dbReference type="ChEBI" id="CHEBI:29105"/>
        <label>2</label>
    </ligand>
</feature>
<feature type="binding site" evidence="1">
    <location>
        <position position="223"/>
    </location>
    <ligand>
        <name>substrate</name>
    </ligand>
</feature>
<feature type="binding site" evidence="1">
    <location>
        <position position="251"/>
    </location>
    <ligand>
        <name>Zn(2+)</name>
        <dbReference type="ChEBI" id="CHEBI:29105"/>
        <label>1</label>
    </ligand>
</feature>
<feature type="binding site" evidence="1">
    <location>
        <position position="255"/>
    </location>
    <ligand>
        <name>substrate</name>
    </ligand>
</feature>
<feature type="binding site" evidence="1">
    <location>
        <position position="267"/>
    </location>
    <ligand>
        <name>substrate</name>
    </ligand>
</feature>
<feature type="modified residue" description="N6-carboxylysine" evidence="1">
    <location>
        <position position="103"/>
    </location>
</feature>
<protein>
    <recommendedName>
        <fullName evidence="1">Dihydroorotase</fullName>
        <shortName evidence="1">DHOase</shortName>
        <ecNumber evidence="1">3.5.2.3</ecNumber>
    </recommendedName>
</protein>